<reference key="1">
    <citation type="journal article" date="2005" name="Plant Physiol.">
        <title>Functional analysis of the RING-type ubiquitin ligase family of Arabidopsis.</title>
        <authorList>
            <person name="Stone S.L."/>
            <person name="Hauksdottir H."/>
            <person name="Troy A."/>
            <person name="Herschleb J."/>
            <person name="Kraft E."/>
            <person name="Callis J."/>
        </authorList>
    </citation>
    <scope>NUCLEOTIDE SEQUENCE [MRNA]</scope>
    <source>
        <tissue>Leaf</tissue>
    </source>
</reference>
<reference key="2">
    <citation type="journal article" date="2000" name="Nature">
        <title>Sequence and analysis of chromosome 1 of the plant Arabidopsis thaliana.</title>
        <authorList>
            <person name="Theologis A."/>
            <person name="Ecker J.R."/>
            <person name="Palm C.J."/>
            <person name="Federspiel N.A."/>
            <person name="Kaul S."/>
            <person name="White O."/>
            <person name="Alonso J."/>
            <person name="Altafi H."/>
            <person name="Araujo R."/>
            <person name="Bowman C.L."/>
            <person name="Brooks S.Y."/>
            <person name="Buehler E."/>
            <person name="Chan A."/>
            <person name="Chao Q."/>
            <person name="Chen H."/>
            <person name="Cheuk R.F."/>
            <person name="Chin C.W."/>
            <person name="Chung M.K."/>
            <person name="Conn L."/>
            <person name="Conway A.B."/>
            <person name="Conway A.R."/>
            <person name="Creasy T.H."/>
            <person name="Dewar K."/>
            <person name="Dunn P."/>
            <person name="Etgu P."/>
            <person name="Feldblyum T.V."/>
            <person name="Feng J.-D."/>
            <person name="Fong B."/>
            <person name="Fujii C.Y."/>
            <person name="Gill J.E."/>
            <person name="Goldsmith A.D."/>
            <person name="Haas B."/>
            <person name="Hansen N.F."/>
            <person name="Hughes B."/>
            <person name="Huizar L."/>
            <person name="Hunter J.L."/>
            <person name="Jenkins J."/>
            <person name="Johnson-Hopson C."/>
            <person name="Khan S."/>
            <person name="Khaykin E."/>
            <person name="Kim C.J."/>
            <person name="Koo H.L."/>
            <person name="Kremenetskaia I."/>
            <person name="Kurtz D.B."/>
            <person name="Kwan A."/>
            <person name="Lam B."/>
            <person name="Langin-Hooper S."/>
            <person name="Lee A."/>
            <person name="Lee J.M."/>
            <person name="Lenz C.A."/>
            <person name="Li J.H."/>
            <person name="Li Y.-P."/>
            <person name="Lin X."/>
            <person name="Liu S.X."/>
            <person name="Liu Z.A."/>
            <person name="Luros J.S."/>
            <person name="Maiti R."/>
            <person name="Marziali A."/>
            <person name="Militscher J."/>
            <person name="Miranda M."/>
            <person name="Nguyen M."/>
            <person name="Nierman W.C."/>
            <person name="Osborne B.I."/>
            <person name="Pai G."/>
            <person name="Peterson J."/>
            <person name="Pham P.K."/>
            <person name="Rizzo M."/>
            <person name="Rooney T."/>
            <person name="Rowley D."/>
            <person name="Sakano H."/>
            <person name="Salzberg S.L."/>
            <person name="Schwartz J.R."/>
            <person name="Shinn P."/>
            <person name="Southwick A.M."/>
            <person name="Sun H."/>
            <person name="Tallon L.J."/>
            <person name="Tambunga G."/>
            <person name="Toriumi M.J."/>
            <person name="Town C.D."/>
            <person name="Utterback T."/>
            <person name="Van Aken S."/>
            <person name="Vaysberg M."/>
            <person name="Vysotskaia V.S."/>
            <person name="Walker M."/>
            <person name="Wu D."/>
            <person name="Yu G."/>
            <person name="Fraser C.M."/>
            <person name="Venter J.C."/>
            <person name="Davis R.W."/>
        </authorList>
    </citation>
    <scope>NUCLEOTIDE SEQUENCE [LARGE SCALE GENOMIC DNA]</scope>
    <source>
        <strain>cv. Columbia</strain>
    </source>
</reference>
<reference key="3">
    <citation type="journal article" date="2017" name="Plant J.">
        <title>Araport11: a complete reannotation of the Arabidopsis thaliana reference genome.</title>
        <authorList>
            <person name="Cheng C.Y."/>
            <person name="Krishnakumar V."/>
            <person name="Chan A.P."/>
            <person name="Thibaud-Nissen F."/>
            <person name="Schobel S."/>
            <person name="Town C.D."/>
        </authorList>
    </citation>
    <scope>GENOME REANNOTATION</scope>
    <source>
        <strain>cv. Columbia</strain>
    </source>
</reference>
<reference key="4">
    <citation type="journal article" date="2002" name="Science">
        <title>Functional annotation of a full-length Arabidopsis cDNA collection.</title>
        <authorList>
            <person name="Seki M."/>
            <person name="Narusaka M."/>
            <person name="Kamiya A."/>
            <person name="Ishida J."/>
            <person name="Satou M."/>
            <person name="Sakurai T."/>
            <person name="Nakajima M."/>
            <person name="Enju A."/>
            <person name="Akiyama K."/>
            <person name="Oono Y."/>
            <person name="Muramatsu M."/>
            <person name="Hayashizaki Y."/>
            <person name="Kawai J."/>
            <person name="Carninci P."/>
            <person name="Itoh M."/>
            <person name="Ishii Y."/>
            <person name="Arakawa T."/>
            <person name="Shibata K."/>
            <person name="Shinagawa A."/>
            <person name="Shinozaki K."/>
        </authorList>
    </citation>
    <scope>NUCLEOTIDE SEQUENCE [LARGE SCALE MRNA]</scope>
    <source>
        <strain>cv. Columbia</strain>
    </source>
</reference>
<reference key="5">
    <citation type="submission" date="2006-07" db="EMBL/GenBank/DDBJ databases">
        <title>Arabidopsis ORF clones.</title>
        <authorList>
            <person name="Kim C.J."/>
            <person name="Chen H."/>
            <person name="Quinitio C."/>
            <person name="Shinn P."/>
            <person name="Ecker J.R."/>
        </authorList>
    </citation>
    <scope>NUCLEOTIDE SEQUENCE [LARGE SCALE MRNA]</scope>
    <source>
        <strain>cv. Columbia</strain>
    </source>
</reference>
<reference key="6">
    <citation type="submission" date="2002-03" db="EMBL/GenBank/DDBJ databases">
        <title>Full-length cDNA from Arabidopsis thaliana.</title>
        <authorList>
            <person name="Brover V.V."/>
            <person name="Troukhan M.E."/>
            <person name="Alexandrov N.A."/>
            <person name="Lu Y.-P."/>
            <person name="Flavell R.B."/>
            <person name="Feldmann K.A."/>
        </authorList>
    </citation>
    <scope>NUCLEOTIDE SEQUENCE [LARGE SCALE MRNA]</scope>
</reference>
<reference key="7">
    <citation type="journal article" date="2014" name="Plant Cell">
        <title>The RING-finger E3 ubiquitin ligase COP1 SUPPRESSOR1 negatively regulates COP1 abundance in maintaining COP1 homeostasis in dark-grown Arabidopsis seedlings.</title>
        <authorList>
            <person name="Xu D."/>
            <person name="Lin F."/>
            <person name="Jiang Y."/>
            <person name="Huang X."/>
            <person name="Li J."/>
            <person name="Ling J."/>
            <person name="Hettiarachchi C."/>
            <person name="Tellgren-Roth C."/>
            <person name="Holm M."/>
            <person name="Deng X.W."/>
        </authorList>
    </citation>
    <scope>FUNCTION</scope>
    <scope>CATALYTIC ACTIVITY</scope>
    <scope>SUBCELLULAR LOCATION</scope>
</reference>
<dbReference type="EC" id="2.3.2.27" evidence="4"/>
<dbReference type="EMBL" id="DQ059102">
    <property type="protein sequence ID" value="AAY57588.1"/>
    <property type="molecule type" value="mRNA"/>
</dbReference>
<dbReference type="EMBL" id="AC005850">
    <property type="protein sequence ID" value="AAD25548.1"/>
    <property type="molecule type" value="Genomic_DNA"/>
</dbReference>
<dbReference type="EMBL" id="CP002684">
    <property type="protein sequence ID" value="AEE33863.1"/>
    <property type="molecule type" value="Genomic_DNA"/>
</dbReference>
<dbReference type="EMBL" id="AK117181">
    <property type="protein sequence ID" value="BAC41858.1"/>
    <property type="molecule type" value="mRNA"/>
</dbReference>
<dbReference type="EMBL" id="BT026113">
    <property type="protein sequence ID" value="ABG48469.1"/>
    <property type="molecule type" value="mRNA"/>
</dbReference>
<dbReference type="EMBL" id="AY085557">
    <property type="protein sequence ID" value="AAM62779.1"/>
    <property type="molecule type" value="mRNA"/>
</dbReference>
<dbReference type="PIR" id="F96641">
    <property type="entry name" value="F96641"/>
</dbReference>
<dbReference type="RefSeq" id="NP_564781.1">
    <property type="nucleotide sequence ID" value="NM_104844.3"/>
</dbReference>
<dbReference type="SMR" id="Q9SY88"/>
<dbReference type="FunCoup" id="Q9SY88">
    <property type="interactions" value="4189"/>
</dbReference>
<dbReference type="IntAct" id="Q9SY88">
    <property type="interactions" value="1"/>
</dbReference>
<dbReference type="STRING" id="3702.Q9SY88"/>
<dbReference type="GlyGen" id="Q9SY88">
    <property type="glycosylation" value="1 site"/>
</dbReference>
<dbReference type="PaxDb" id="3702-AT1G61620.1"/>
<dbReference type="ProteomicsDB" id="222721"/>
<dbReference type="EnsemblPlants" id="AT1G61620.1">
    <property type="protein sequence ID" value="AT1G61620.1"/>
    <property type="gene ID" value="AT1G61620"/>
</dbReference>
<dbReference type="GeneID" id="842458"/>
<dbReference type="Gramene" id="AT1G61620.1">
    <property type="protein sequence ID" value="AT1G61620.1"/>
    <property type="gene ID" value="AT1G61620"/>
</dbReference>
<dbReference type="KEGG" id="ath:AT1G61620"/>
<dbReference type="Araport" id="AT1G61620"/>
<dbReference type="TAIR" id="AT1G61620">
    <property type="gene designation" value="CSU1"/>
</dbReference>
<dbReference type="eggNOG" id="KOG3039">
    <property type="taxonomic scope" value="Eukaryota"/>
</dbReference>
<dbReference type="HOGENOM" id="CLU_053742_1_0_1"/>
<dbReference type="InParanoid" id="Q9SY88"/>
<dbReference type="OMA" id="PCVTKFM"/>
<dbReference type="OrthoDB" id="116827at2759"/>
<dbReference type="PhylomeDB" id="Q9SY88"/>
<dbReference type="UniPathway" id="UPA00143"/>
<dbReference type="CD-CODE" id="4299E36E">
    <property type="entry name" value="Nucleolus"/>
</dbReference>
<dbReference type="CD-CODE" id="9A8A194B">
    <property type="entry name" value="Nuclear speckle"/>
</dbReference>
<dbReference type="PRO" id="PR:Q9SY88"/>
<dbReference type="Proteomes" id="UP000006548">
    <property type="component" value="Chromosome 1"/>
</dbReference>
<dbReference type="ExpressionAtlas" id="Q9SY88">
    <property type="expression patterns" value="baseline and differential"/>
</dbReference>
<dbReference type="GO" id="GO:0016607">
    <property type="term" value="C:nuclear speck"/>
    <property type="evidence" value="ECO:0000314"/>
    <property type="project" value="TAIR"/>
</dbReference>
<dbReference type="GO" id="GO:0061630">
    <property type="term" value="F:ubiquitin protein ligase activity"/>
    <property type="evidence" value="ECO:0000314"/>
    <property type="project" value="TAIR"/>
</dbReference>
<dbReference type="GO" id="GO:0008270">
    <property type="term" value="F:zinc ion binding"/>
    <property type="evidence" value="ECO:0007669"/>
    <property type="project" value="UniProtKB-KW"/>
</dbReference>
<dbReference type="GO" id="GO:0009640">
    <property type="term" value="P:photomorphogenesis"/>
    <property type="evidence" value="ECO:0000316"/>
    <property type="project" value="TAIR"/>
</dbReference>
<dbReference type="GO" id="GO:0031648">
    <property type="term" value="P:protein destabilization"/>
    <property type="evidence" value="ECO:0000270"/>
    <property type="project" value="TAIR"/>
</dbReference>
<dbReference type="GO" id="GO:0016567">
    <property type="term" value="P:protein ubiquitination"/>
    <property type="evidence" value="ECO:0007669"/>
    <property type="project" value="UniProtKB-UniPathway"/>
</dbReference>
<dbReference type="FunFam" id="3.30.40.10:FF:000444">
    <property type="entry name" value="Nitric oxide synthase-interacting protein"/>
    <property type="match status" value="1"/>
</dbReference>
<dbReference type="FunFam" id="3.30.40.10:FF:000330">
    <property type="entry name" value="nitric oxide synthase-interacting protein-like"/>
    <property type="match status" value="1"/>
</dbReference>
<dbReference type="Gene3D" id="3.30.40.10">
    <property type="entry name" value="Zinc/RING finger domain, C3HC4 (zinc finger)"/>
    <property type="match status" value="2"/>
</dbReference>
<dbReference type="InterPro" id="IPR016818">
    <property type="entry name" value="NOSIP"/>
</dbReference>
<dbReference type="InterPro" id="IPR031790">
    <property type="entry name" value="Znf-NOSIP"/>
</dbReference>
<dbReference type="InterPro" id="IPR001841">
    <property type="entry name" value="Znf_RING"/>
</dbReference>
<dbReference type="InterPro" id="IPR013083">
    <property type="entry name" value="Znf_RING/FYVE/PHD"/>
</dbReference>
<dbReference type="InterPro" id="IPR017907">
    <property type="entry name" value="Znf_RING_CS"/>
</dbReference>
<dbReference type="PANTHER" id="PTHR13063">
    <property type="entry name" value="ENOS INTERACTING PROTEIN"/>
    <property type="match status" value="1"/>
</dbReference>
<dbReference type="PANTHER" id="PTHR13063:SF10">
    <property type="entry name" value="NITRIC OXIDE SYNTHASE-INTERACTING PROTEIN"/>
    <property type="match status" value="1"/>
</dbReference>
<dbReference type="Pfam" id="PF04641">
    <property type="entry name" value="Rtf2"/>
    <property type="match status" value="1"/>
</dbReference>
<dbReference type="Pfam" id="PF15906">
    <property type="entry name" value="zf-NOSIP"/>
    <property type="match status" value="1"/>
</dbReference>
<dbReference type="PIRSF" id="PIRSF023577">
    <property type="entry name" value="ENOS_interacting"/>
    <property type="match status" value="1"/>
</dbReference>
<dbReference type="SMART" id="SM00184">
    <property type="entry name" value="RING"/>
    <property type="match status" value="2"/>
</dbReference>
<dbReference type="SUPFAM" id="SSF57850">
    <property type="entry name" value="RING/U-box"/>
    <property type="match status" value="2"/>
</dbReference>
<dbReference type="PROSITE" id="PS00518">
    <property type="entry name" value="ZF_RING_1"/>
    <property type="match status" value="1"/>
</dbReference>
<dbReference type="PROSITE" id="PS50089">
    <property type="entry name" value="ZF_RING_2"/>
    <property type="match status" value="1"/>
</dbReference>
<sequence>MPQRHSKNNNDLAYFTYDEKKKLGYGTQRERLGRDSIKPFDACSLCLKPFIDPMCCHKGHVFCRECILECFLAQKKDIQRRLAAHSSQKKQDKDEEEERLMLQKARELDEFDQQNHSAMPRNSDKNHNEDKNGFHGANSVKTTSFEEEALRTMKAFWLPSATPAASVRVDAPETHTVCPEGKEKLKLKNLFAIRFTEDNSEEEETKTKSASSSSYDKSYICPSCKVTLTNTMSLVALSSCGHVFCKKCAEKFMPVDKVCLVCDKPCKDRNLVGLKKGGTGFAEHDDHLEAKEYKHLGSGSGLGLVRPVKT</sequence>
<gene>
    <name evidence="5" type="primary">CSU1</name>
    <name evidence="7" type="ordered locus">At1g61620</name>
    <name evidence="8" type="ORF">T25B24.3</name>
</gene>
<keyword id="KW-0175">Coiled coil</keyword>
<keyword id="KW-0479">Metal-binding</keyword>
<keyword id="KW-0539">Nucleus</keyword>
<keyword id="KW-1185">Reference proteome</keyword>
<keyword id="KW-0677">Repeat</keyword>
<keyword id="KW-0808">Transferase</keyword>
<keyword id="KW-0833">Ubl conjugation pathway</keyword>
<keyword id="KW-0862">Zinc</keyword>
<keyword id="KW-0863">Zinc-finger</keyword>
<name>CSU1_ARATH</name>
<accession>Q9SY88</accession>
<accession>Q8GZ68</accession>
<protein>
    <recommendedName>
        <fullName evidence="6">E3 ubiquitin-protein ligase CSU1</fullName>
        <ecNumber evidence="4">2.3.2.27</ecNumber>
    </recommendedName>
    <alternativeName>
        <fullName evidence="5">Protein COP1 SUPPRESSOR 1</fullName>
    </alternativeName>
    <alternativeName>
        <fullName evidence="6">RING-type E3 ubiquitin transferase CSU1</fullName>
    </alternativeName>
</protein>
<evidence type="ECO:0000255" key="1"/>
<evidence type="ECO:0000255" key="2">
    <source>
        <dbReference type="PROSITE-ProRule" id="PRU00175"/>
    </source>
</evidence>
<evidence type="ECO:0000256" key="3">
    <source>
        <dbReference type="SAM" id="MobiDB-lite"/>
    </source>
</evidence>
<evidence type="ECO:0000269" key="4">
    <source>
    </source>
</evidence>
<evidence type="ECO:0000303" key="5">
    <source>
    </source>
</evidence>
<evidence type="ECO:0000305" key="6"/>
<evidence type="ECO:0000312" key="7">
    <source>
        <dbReference type="Araport" id="AT1G61620"/>
    </source>
</evidence>
<evidence type="ECO:0000312" key="8">
    <source>
        <dbReference type="EMBL" id="AAD25548.1"/>
    </source>
</evidence>
<organism>
    <name type="scientific">Arabidopsis thaliana</name>
    <name type="common">Mouse-ear cress</name>
    <dbReference type="NCBI Taxonomy" id="3702"/>
    <lineage>
        <taxon>Eukaryota</taxon>
        <taxon>Viridiplantae</taxon>
        <taxon>Streptophyta</taxon>
        <taxon>Embryophyta</taxon>
        <taxon>Tracheophyta</taxon>
        <taxon>Spermatophyta</taxon>
        <taxon>Magnoliopsida</taxon>
        <taxon>eudicotyledons</taxon>
        <taxon>Gunneridae</taxon>
        <taxon>Pentapetalae</taxon>
        <taxon>rosids</taxon>
        <taxon>malvids</taxon>
        <taxon>Brassicales</taxon>
        <taxon>Brassicaceae</taxon>
        <taxon>Camelineae</taxon>
        <taxon>Arabidopsis</taxon>
    </lineage>
</organism>
<proteinExistence type="evidence at protein level"/>
<feature type="chain" id="PRO_0000441873" description="E3 ubiquitin-protein ligase CSU1">
    <location>
        <begin position="1"/>
        <end position="310"/>
    </location>
</feature>
<feature type="zinc finger region" description="RING-type 1; degenerate" evidence="2">
    <location>
        <begin position="43"/>
        <end position="67"/>
    </location>
</feature>
<feature type="zinc finger region" description="RING-type 2" evidence="2">
    <location>
        <begin position="221"/>
        <end position="263"/>
    </location>
</feature>
<feature type="region of interest" description="Disordered" evidence="3">
    <location>
        <begin position="110"/>
        <end position="138"/>
    </location>
</feature>
<feature type="coiled-coil region" evidence="1">
    <location>
        <begin position="75"/>
        <end position="95"/>
    </location>
</feature>
<feature type="compositionally biased region" description="Basic and acidic residues" evidence="3">
    <location>
        <begin position="122"/>
        <end position="133"/>
    </location>
</feature>
<feature type="sequence conflict" description="In Ref. 4; BAC41858." evidence="6" ref="4">
    <original>I</original>
    <variation>M</variation>
    <location>
        <position position="67"/>
    </location>
</feature>
<feature type="sequence conflict" description="In Ref. 4; BAC41858." evidence="6" ref="4">
    <original>N</original>
    <variation>D</variation>
    <location>
        <position position="128"/>
    </location>
</feature>
<feature type="sequence conflict" description="In Ref. 4; BAC41858." evidence="6" ref="4">
    <original>G</original>
    <variation>V</variation>
    <location>
        <position position="277"/>
    </location>
</feature>
<comment type="function">
    <text evidence="4">RING-finger E3 ubiquitin-protein ligase that plays an major role in maintaining COP1 homeostasis in darkness. Negatively regulates COP1 protein accumulation by targeting COP1 for ubiquitination and subsequent proteasomal degradation in dark-grown seedlings. Negatively regulates the accumulation of SPA1 protein in the dark.</text>
</comment>
<comment type="catalytic activity">
    <reaction evidence="4">
        <text>S-ubiquitinyl-[E2 ubiquitin-conjugating enzyme]-L-cysteine + [acceptor protein]-L-lysine = [E2 ubiquitin-conjugating enzyme]-L-cysteine + N(6)-ubiquitinyl-[acceptor protein]-L-lysine.</text>
        <dbReference type="EC" id="2.3.2.27"/>
    </reaction>
</comment>
<comment type="pathway">
    <text evidence="6">Protein modification; protein ubiquitination.</text>
</comment>
<comment type="subcellular location">
    <subcellularLocation>
        <location evidence="4">Nucleus</location>
    </subcellularLocation>
    <subcellularLocation>
        <location evidence="4">Nucleus speckle</location>
    </subcellularLocation>
    <text evidence="4">Is recruited to nuclear speckles by COP1 in the dark.</text>
</comment>
<comment type="similarity">
    <text evidence="6">Belongs to the NOSIP family.</text>
</comment>